<sequence>MLIGVGTDIVQIPRIEKILHLYPELFAKKILASKELKQFALLGKINHAAFLAKRFAAKEAVSKAFGVGIGQGINFKDITILNNDLGKPIVEVSSNYTNTLSPFNIHLSLADDYPVCVAFAVIESSYNVILG</sequence>
<accession>C3PP12</accession>
<feature type="chain" id="PRO_1000202802" description="Holo-[acyl-carrier-protein] synthase">
    <location>
        <begin position="1"/>
        <end position="131"/>
    </location>
</feature>
<feature type="binding site" evidence="1">
    <location>
        <position position="8"/>
    </location>
    <ligand>
        <name>Mg(2+)</name>
        <dbReference type="ChEBI" id="CHEBI:18420"/>
    </ligand>
</feature>
<feature type="binding site" evidence="1">
    <location>
        <position position="59"/>
    </location>
    <ligand>
        <name>Mg(2+)</name>
        <dbReference type="ChEBI" id="CHEBI:18420"/>
    </ligand>
</feature>
<comment type="function">
    <text evidence="1">Transfers the 4'-phosphopantetheine moiety from coenzyme A to a Ser of acyl-carrier-protein.</text>
</comment>
<comment type="catalytic activity">
    <reaction evidence="1">
        <text>apo-[ACP] + CoA = holo-[ACP] + adenosine 3',5'-bisphosphate + H(+)</text>
        <dbReference type="Rhea" id="RHEA:12068"/>
        <dbReference type="Rhea" id="RHEA-COMP:9685"/>
        <dbReference type="Rhea" id="RHEA-COMP:9690"/>
        <dbReference type="ChEBI" id="CHEBI:15378"/>
        <dbReference type="ChEBI" id="CHEBI:29999"/>
        <dbReference type="ChEBI" id="CHEBI:57287"/>
        <dbReference type="ChEBI" id="CHEBI:58343"/>
        <dbReference type="ChEBI" id="CHEBI:64479"/>
        <dbReference type="EC" id="2.7.8.7"/>
    </reaction>
</comment>
<comment type="cofactor">
    <cofactor evidence="1">
        <name>Mg(2+)</name>
        <dbReference type="ChEBI" id="CHEBI:18420"/>
    </cofactor>
</comment>
<comment type="subcellular location">
    <subcellularLocation>
        <location evidence="1">Cytoplasm</location>
    </subcellularLocation>
</comment>
<comment type="similarity">
    <text evidence="1">Belongs to the P-Pant transferase superfamily. AcpS family.</text>
</comment>
<organism>
    <name type="scientific">Rickettsia africae (strain ESF-5)</name>
    <dbReference type="NCBI Taxonomy" id="347255"/>
    <lineage>
        <taxon>Bacteria</taxon>
        <taxon>Pseudomonadati</taxon>
        <taxon>Pseudomonadota</taxon>
        <taxon>Alphaproteobacteria</taxon>
        <taxon>Rickettsiales</taxon>
        <taxon>Rickettsiaceae</taxon>
        <taxon>Rickettsieae</taxon>
        <taxon>Rickettsia</taxon>
        <taxon>spotted fever group</taxon>
    </lineage>
</organism>
<evidence type="ECO:0000255" key="1">
    <source>
        <dbReference type="HAMAP-Rule" id="MF_00101"/>
    </source>
</evidence>
<name>ACPS_RICAE</name>
<keyword id="KW-0963">Cytoplasm</keyword>
<keyword id="KW-0275">Fatty acid biosynthesis</keyword>
<keyword id="KW-0276">Fatty acid metabolism</keyword>
<keyword id="KW-0444">Lipid biosynthesis</keyword>
<keyword id="KW-0443">Lipid metabolism</keyword>
<keyword id="KW-0460">Magnesium</keyword>
<keyword id="KW-0479">Metal-binding</keyword>
<keyword id="KW-0808">Transferase</keyword>
<reference key="1">
    <citation type="journal article" date="2009" name="BMC Genomics">
        <title>Analysis of the Rickettsia africae genome reveals that virulence acquisition in Rickettsia species may be explained by genome reduction.</title>
        <authorList>
            <person name="Fournier P.-E."/>
            <person name="El Karkouri K."/>
            <person name="Leroy Q."/>
            <person name="Robert C."/>
            <person name="Giumelli B."/>
            <person name="Renesto P."/>
            <person name="Socolovschi C."/>
            <person name="Parola P."/>
            <person name="Audic S."/>
            <person name="Raoult D."/>
        </authorList>
    </citation>
    <scope>NUCLEOTIDE SEQUENCE [LARGE SCALE GENOMIC DNA]</scope>
    <source>
        <strain>ESF-5</strain>
    </source>
</reference>
<protein>
    <recommendedName>
        <fullName evidence="1">Holo-[acyl-carrier-protein] synthase</fullName>
        <shortName evidence="1">Holo-ACP synthase</shortName>
        <ecNumber evidence="1">2.7.8.7</ecNumber>
    </recommendedName>
    <alternativeName>
        <fullName evidence="1">4'-phosphopantetheinyl transferase AcpS</fullName>
    </alternativeName>
</protein>
<dbReference type="EC" id="2.7.8.7" evidence="1"/>
<dbReference type="EMBL" id="CP001612">
    <property type="protein sequence ID" value="ACP53672.1"/>
    <property type="molecule type" value="Genomic_DNA"/>
</dbReference>
<dbReference type="RefSeq" id="WP_012719862.1">
    <property type="nucleotide sequence ID" value="NC_012633.1"/>
</dbReference>
<dbReference type="SMR" id="C3PP12"/>
<dbReference type="KEGG" id="raf:RAF_ORF0798"/>
<dbReference type="HOGENOM" id="CLU_089696_3_1_5"/>
<dbReference type="Proteomes" id="UP000002305">
    <property type="component" value="Chromosome"/>
</dbReference>
<dbReference type="GO" id="GO:0005737">
    <property type="term" value="C:cytoplasm"/>
    <property type="evidence" value="ECO:0007669"/>
    <property type="project" value="UniProtKB-SubCell"/>
</dbReference>
<dbReference type="GO" id="GO:0008897">
    <property type="term" value="F:holo-[acyl-carrier-protein] synthase activity"/>
    <property type="evidence" value="ECO:0007669"/>
    <property type="project" value="UniProtKB-UniRule"/>
</dbReference>
<dbReference type="GO" id="GO:0000287">
    <property type="term" value="F:magnesium ion binding"/>
    <property type="evidence" value="ECO:0007669"/>
    <property type="project" value="UniProtKB-UniRule"/>
</dbReference>
<dbReference type="GO" id="GO:0006633">
    <property type="term" value="P:fatty acid biosynthetic process"/>
    <property type="evidence" value="ECO:0007669"/>
    <property type="project" value="UniProtKB-UniRule"/>
</dbReference>
<dbReference type="Gene3D" id="3.90.470.20">
    <property type="entry name" value="4'-phosphopantetheinyl transferase domain"/>
    <property type="match status" value="1"/>
</dbReference>
<dbReference type="HAMAP" id="MF_00101">
    <property type="entry name" value="AcpS"/>
    <property type="match status" value="1"/>
</dbReference>
<dbReference type="InterPro" id="IPR008278">
    <property type="entry name" value="4-PPantetheinyl_Trfase_dom"/>
</dbReference>
<dbReference type="InterPro" id="IPR037143">
    <property type="entry name" value="4-PPantetheinyl_Trfase_dom_sf"/>
</dbReference>
<dbReference type="InterPro" id="IPR002582">
    <property type="entry name" value="ACPS"/>
</dbReference>
<dbReference type="InterPro" id="IPR004568">
    <property type="entry name" value="Ppantetheine-prot_Trfase_dom"/>
</dbReference>
<dbReference type="NCBIfam" id="TIGR00516">
    <property type="entry name" value="acpS"/>
    <property type="match status" value="1"/>
</dbReference>
<dbReference type="NCBIfam" id="TIGR00556">
    <property type="entry name" value="pantethn_trn"/>
    <property type="match status" value="1"/>
</dbReference>
<dbReference type="Pfam" id="PF01648">
    <property type="entry name" value="ACPS"/>
    <property type="match status" value="1"/>
</dbReference>
<dbReference type="SUPFAM" id="SSF56214">
    <property type="entry name" value="4'-phosphopantetheinyl transferase"/>
    <property type="match status" value="1"/>
</dbReference>
<gene>
    <name evidence="1" type="primary">acpS</name>
    <name type="ordered locus">RAF_ORF0798</name>
</gene>
<proteinExistence type="inferred from homology"/>